<name>GPSB_STRPD</name>
<feature type="chain" id="PRO_0000337960" description="Cell cycle protein GpsB">
    <location>
        <begin position="1"/>
        <end position="108"/>
    </location>
</feature>
<feature type="coiled-coil region" evidence="1">
    <location>
        <begin position="32"/>
        <end position="69"/>
    </location>
</feature>
<protein>
    <recommendedName>
        <fullName evidence="1">Cell cycle protein GpsB</fullName>
    </recommendedName>
    <alternativeName>
        <fullName evidence="1">Guiding PBP1-shuttling protein</fullName>
    </alternativeName>
</protein>
<accession>Q1JFM5</accession>
<reference key="1">
    <citation type="journal article" date="2006" name="Proc. Natl. Acad. Sci. U.S.A.">
        <title>Molecular genetic anatomy of inter- and intraserotype variation in the human bacterial pathogen group A Streptococcus.</title>
        <authorList>
            <person name="Beres S.B."/>
            <person name="Richter E.W."/>
            <person name="Nagiec M.J."/>
            <person name="Sumby P."/>
            <person name="Porcella S.F."/>
            <person name="DeLeo F.R."/>
            <person name="Musser J.M."/>
        </authorList>
    </citation>
    <scope>NUCLEOTIDE SEQUENCE [LARGE SCALE GENOMIC DNA]</scope>
    <source>
        <strain>MGAS10270</strain>
    </source>
</reference>
<comment type="function">
    <text evidence="1">Divisome component that associates with the complex late in its assembly, after the Z-ring is formed, and is dependent on DivIC and PBP2B for its recruitment to the divisome. Together with EzrA, is a key component of the system that regulates PBP1 localization during cell cycle progression. Its main role could be the removal of PBP1 from the cell pole after pole maturation is completed. Also contributes to the recruitment of PBP1 to the division complex. Not essential for septum formation.</text>
</comment>
<comment type="subunit">
    <text evidence="1">Forms polymers through the coiled coil domains. Interacts with PBP1, MreC and EzrA.</text>
</comment>
<comment type="subcellular location">
    <subcellularLocation>
        <location evidence="1">Cytoplasm</location>
    </subcellularLocation>
    <text evidence="1">Shuttles between the lateral wall and the division site in a cell cycle-dependent manner.</text>
</comment>
<comment type="similarity">
    <text evidence="1">Belongs to the GpsB family.</text>
</comment>
<organism>
    <name type="scientific">Streptococcus pyogenes serotype M2 (strain MGAS10270)</name>
    <dbReference type="NCBI Taxonomy" id="370552"/>
    <lineage>
        <taxon>Bacteria</taxon>
        <taxon>Bacillati</taxon>
        <taxon>Bacillota</taxon>
        <taxon>Bacilli</taxon>
        <taxon>Lactobacillales</taxon>
        <taxon>Streptococcaceae</taxon>
        <taxon>Streptococcus</taxon>
    </lineage>
</organism>
<evidence type="ECO:0000255" key="1">
    <source>
        <dbReference type="HAMAP-Rule" id="MF_02011"/>
    </source>
</evidence>
<proteinExistence type="inferred from homology"/>
<dbReference type="EMBL" id="CP000260">
    <property type="protein sequence ID" value="ABF34534.1"/>
    <property type="molecule type" value="Genomic_DNA"/>
</dbReference>
<dbReference type="RefSeq" id="WP_002983626.1">
    <property type="nucleotide sequence ID" value="NZ_CVUH01000010.1"/>
</dbReference>
<dbReference type="SMR" id="Q1JFM5"/>
<dbReference type="GeneID" id="69900485"/>
<dbReference type="KEGG" id="sph:MGAS10270_Spy1469"/>
<dbReference type="HOGENOM" id="CLU_140309_1_0_9"/>
<dbReference type="Proteomes" id="UP000002436">
    <property type="component" value="Chromosome"/>
</dbReference>
<dbReference type="GO" id="GO:0005737">
    <property type="term" value="C:cytoplasm"/>
    <property type="evidence" value="ECO:0007669"/>
    <property type="project" value="UniProtKB-SubCell"/>
</dbReference>
<dbReference type="GO" id="GO:0051301">
    <property type="term" value="P:cell division"/>
    <property type="evidence" value="ECO:0007669"/>
    <property type="project" value="UniProtKB-UniRule"/>
</dbReference>
<dbReference type="GO" id="GO:0008360">
    <property type="term" value="P:regulation of cell shape"/>
    <property type="evidence" value="ECO:0007669"/>
    <property type="project" value="UniProtKB-UniRule"/>
</dbReference>
<dbReference type="Gene3D" id="6.10.250.660">
    <property type="match status" value="1"/>
</dbReference>
<dbReference type="HAMAP" id="MF_02011">
    <property type="entry name" value="GpsB"/>
    <property type="match status" value="1"/>
</dbReference>
<dbReference type="InterPro" id="IPR011229">
    <property type="entry name" value="Cell_cycle_GpsB"/>
</dbReference>
<dbReference type="InterPro" id="IPR019933">
    <property type="entry name" value="DivIVA_domain"/>
</dbReference>
<dbReference type="InterPro" id="IPR007793">
    <property type="entry name" value="DivIVA_fam"/>
</dbReference>
<dbReference type="NCBIfam" id="TIGR03544">
    <property type="entry name" value="DivI1A_domain"/>
    <property type="match status" value="1"/>
</dbReference>
<dbReference type="NCBIfam" id="NF010725">
    <property type="entry name" value="PRK14127.1"/>
    <property type="match status" value="1"/>
</dbReference>
<dbReference type="PANTHER" id="PTHR35794:SF1">
    <property type="entry name" value="CELL CYCLE PROTEIN GPSB"/>
    <property type="match status" value="1"/>
</dbReference>
<dbReference type="PANTHER" id="PTHR35794">
    <property type="entry name" value="CELL DIVISION PROTEIN DIVIVA"/>
    <property type="match status" value="1"/>
</dbReference>
<dbReference type="Pfam" id="PF05103">
    <property type="entry name" value="DivIVA"/>
    <property type="match status" value="1"/>
</dbReference>
<dbReference type="PIRSF" id="PIRSF029938">
    <property type="entry name" value="UCP029938"/>
    <property type="match status" value="1"/>
</dbReference>
<sequence length="108" mass="12445">MTSIIYSPKDIFEQEFKTSMRGFDKKEVDEFLDNVIKDYENFNAQIEALKAENEALKKAKFQARNTVSATVQQPVPQPTRVAQSATNFDILKRISKLEKEVFGKQIIE</sequence>
<gene>
    <name evidence="1" type="primary">gpsB</name>
    <name type="ordered locus">MGAS10270_Spy1469</name>
</gene>
<keyword id="KW-0131">Cell cycle</keyword>
<keyword id="KW-0132">Cell division</keyword>
<keyword id="KW-0133">Cell shape</keyword>
<keyword id="KW-0175">Coiled coil</keyword>
<keyword id="KW-0963">Cytoplasm</keyword>